<keyword id="KW-0028">Amino-acid biosynthesis</keyword>
<keyword id="KW-0963">Cytoplasm</keyword>
<keyword id="KW-0554">One-carbon metabolism</keyword>
<keyword id="KW-0663">Pyridoxal phosphate</keyword>
<keyword id="KW-0808">Transferase</keyword>
<feature type="chain" id="PRO_0000234947" description="Serine hydroxymethyltransferase">
    <location>
        <begin position="1"/>
        <end position="429"/>
    </location>
</feature>
<feature type="binding site" evidence="1">
    <location>
        <position position="133"/>
    </location>
    <ligand>
        <name>(6S)-5,6,7,8-tetrahydrofolate</name>
        <dbReference type="ChEBI" id="CHEBI:57453"/>
    </ligand>
</feature>
<feature type="binding site" evidence="1">
    <location>
        <begin position="137"/>
        <end position="139"/>
    </location>
    <ligand>
        <name>(6S)-5,6,7,8-tetrahydrofolate</name>
        <dbReference type="ChEBI" id="CHEBI:57453"/>
    </ligand>
</feature>
<feature type="binding site" evidence="1">
    <location>
        <position position="259"/>
    </location>
    <ligand>
        <name>(6S)-5,6,7,8-tetrahydrofolate</name>
        <dbReference type="ChEBI" id="CHEBI:57453"/>
    </ligand>
</feature>
<feature type="site" description="Plays an important role in substrate specificity" evidence="1">
    <location>
        <position position="242"/>
    </location>
</feature>
<feature type="modified residue" description="N6-(pyridoxal phosphate)lysine" evidence="1">
    <location>
        <position position="243"/>
    </location>
</feature>
<accession>Q2NIT8</accession>
<proteinExistence type="inferred from homology"/>
<gene>
    <name evidence="1" type="primary">glyA</name>
    <name type="ordered locus">AYWB_538</name>
</gene>
<name>GLYA_AYWBP</name>
<protein>
    <recommendedName>
        <fullName evidence="1">Serine hydroxymethyltransferase</fullName>
        <shortName evidence="1">SHMT</shortName>
        <shortName evidence="1">Serine methylase</shortName>
        <ecNumber evidence="1">2.1.2.1</ecNumber>
    </recommendedName>
</protein>
<sequence>MPKNTKRKRLCPKMNQKLGLKDQDQEIFDLIEQEKARQKENILLIASENFVSQAVLDAQGSILTNKYAEGYPQARYYNGCKNVDQIEKIAIQRATKLFGAKYANVQPHSGSQANMGVFQALLKPGDKILGLSLMDGGHLTHGHKLSFSGGFYEAHFYNVNPQTEMLDYDEIRKVALAVKPKLIIAGYSAYSKTINFKKFRQIADEVNAYLIADIAHIAGLVACGLHPCPFEANADVVTSTMHKTLRGPRGGLILTNKEELFKKINRGIFPGIQGGPCIHTIAAKAVAFQEAMMPSFKEYQKQVIKNANTFAKAFQQKGYRIVSGSTDNHLFLIDVKHKNTEFTGAKIANMLEKINIVVNKNTIPFDQEKPFVTSGIRIGTPAMTTVGFRENDFVAVADLMDKAINHLDDESYLSQIKQQVLALLSKFNK</sequence>
<dbReference type="EC" id="2.1.2.1" evidence="1"/>
<dbReference type="EMBL" id="CP000061">
    <property type="protein sequence ID" value="ABC65655.1"/>
    <property type="molecule type" value="Genomic_DNA"/>
</dbReference>
<dbReference type="SMR" id="Q2NIT8"/>
<dbReference type="STRING" id="322098.AYWB_538"/>
<dbReference type="KEGG" id="ayw:AYWB_538"/>
<dbReference type="eggNOG" id="COG0112">
    <property type="taxonomic scope" value="Bacteria"/>
</dbReference>
<dbReference type="HOGENOM" id="CLU_022477_2_1_14"/>
<dbReference type="PhylomeDB" id="Q2NIT8"/>
<dbReference type="UniPathway" id="UPA00193"/>
<dbReference type="UniPathway" id="UPA00288">
    <property type="reaction ID" value="UER01023"/>
</dbReference>
<dbReference type="Proteomes" id="UP000001934">
    <property type="component" value="Chromosome"/>
</dbReference>
<dbReference type="GO" id="GO:0005829">
    <property type="term" value="C:cytosol"/>
    <property type="evidence" value="ECO:0007669"/>
    <property type="project" value="TreeGrafter"/>
</dbReference>
<dbReference type="GO" id="GO:0004372">
    <property type="term" value="F:glycine hydroxymethyltransferase activity"/>
    <property type="evidence" value="ECO:0007669"/>
    <property type="project" value="UniProtKB-UniRule"/>
</dbReference>
<dbReference type="GO" id="GO:0030170">
    <property type="term" value="F:pyridoxal phosphate binding"/>
    <property type="evidence" value="ECO:0007669"/>
    <property type="project" value="UniProtKB-UniRule"/>
</dbReference>
<dbReference type="GO" id="GO:0019264">
    <property type="term" value="P:glycine biosynthetic process from serine"/>
    <property type="evidence" value="ECO:0007669"/>
    <property type="project" value="UniProtKB-UniRule"/>
</dbReference>
<dbReference type="GO" id="GO:0035999">
    <property type="term" value="P:tetrahydrofolate interconversion"/>
    <property type="evidence" value="ECO:0007669"/>
    <property type="project" value="UniProtKB-UniRule"/>
</dbReference>
<dbReference type="CDD" id="cd00378">
    <property type="entry name" value="SHMT"/>
    <property type="match status" value="1"/>
</dbReference>
<dbReference type="FunFam" id="3.40.640.10:FF:000001">
    <property type="entry name" value="Serine hydroxymethyltransferase"/>
    <property type="match status" value="1"/>
</dbReference>
<dbReference type="Gene3D" id="3.90.1150.10">
    <property type="entry name" value="Aspartate Aminotransferase, domain 1"/>
    <property type="match status" value="1"/>
</dbReference>
<dbReference type="Gene3D" id="3.40.640.10">
    <property type="entry name" value="Type I PLP-dependent aspartate aminotransferase-like (Major domain)"/>
    <property type="match status" value="1"/>
</dbReference>
<dbReference type="HAMAP" id="MF_00051">
    <property type="entry name" value="SHMT"/>
    <property type="match status" value="1"/>
</dbReference>
<dbReference type="InterPro" id="IPR015424">
    <property type="entry name" value="PyrdxlP-dep_Trfase"/>
</dbReference>
<dbReference type="InterPro" id="IPR015421">
    <property type="entry name" value="PyrdxlP-dep_Trfase_major"/>
</dbReference>
<dbReference type="InterPro" id="IPR015422">
    <property type="entry name" value="PyrdxlP-dep_Trfase_small"/>
</dbReference>
<dbReference type="InterPro" id="IPR001085">
    <property type="entry name" value="Ser_HO-MeTrfase"/>
</dbReference>
<dbReference type="InterPro" id="IPR049943">
    <property type="entry name" value="Ser_HO-MeTrfase-like"/>
</dbReference>
<dbReference type="InterPro" id="IPR019798">
    <property type="entry name" value="Ser_HO-MeTrfase_PLP_BS"/>
</dbReference>
<dbReference type="InterPro" id="IPR039429">
    <property type="entry name" value="SHMT-like_dom"/>
</dbReference>
<dbReference type="NCBIfam" id="NF000586">
    <property type="entry name" value="PRK00011.1"/>
    <property type="match status" value="1"/>
</dbReference>
<dbReference type="PANTHER" id="PTHR11680">
    <property type="entry name" value="SERINE HYDROXYMETHYLTRANSFERASE"/>
    <property type="match status" value="1"/>
</dbReference>
<dbReference type="PANTHER" id="PTHR11680:SF35">
    <property type="entry name" value="SERINE HYDROXYMETHYLTRANSFERASE 1"/>
    <property type="match status" value="1"/>
</dbReference>
<dbReference type="Pfam" id="PF00464">
    <property type="entry name" value="SHMT"/>
    <property type="match status" value="1"/>
</dbReference>
<dbReference type="PIRSF" id="PIRSF000412">
    <property type="entry name" value="SHMT"/>
    <property type="match status" value="1"/>
</dbReference>
<dbReference type="SUPFAM" id="SSF53383">
    <property type="entry name" value="PLP-dependent transferases"/>
    <property type="match status" value="1"/>
</dbReference>
<dbReference type="PROSITE" id="PS00096">
    <property type="entry name" value="SHMT"/>
    <property type="match status" value="1"/>
</dbReference>
<reference key="1">
    <citation type="journal article" date="2006" name="J. Bacteriol.">
        <title>Living with genome instability: the adaptation of phytoplasmas to diverse environments of their insect and plant hosts.</title>
        <authorList>
            <person name="Bai X."/>
            <person name="Zhang J."/>
            <person name="Ewing A."/>
            <person name="Miller S.A."/>
            <person name="Jancso Radek A."/>
            <person name="Shevchenko D.V."/>
            <person name="Tsukerman K."/>
            <person name="Walunas T."/>
            <person name="Lapidus A."/>
            <person name="Campbell J.W."/>
            <person name="Hogenhout S.A."/>
        </authorList>
    </citation>
    <scope>NUCLEOTIDE SEQUENCE [LARGE SCALE GENOMIC DNA]</scope>
    <source>
        <strain>AYWB</strain>
    </source>
</reference>
<comment type="function">
    <text evidence="1">Catalyzes the reversible interconversion of serine and glycine with tetrahydrofolate (THF) serving as the one-carbon carrier. This reaction serves as the major source of one-carbon groups required for the biosynthesis of purines, thymidylate, methionine, and other important biomolecules. Also exhibits THF-independent aldolase activity toward beta-hydroxyamino acids, producing glycine and aldehydes, via a retro-aldol mechanism.</text>
</comment>
<comment type="catalytic activity">
    <reaction evidence="1">
        <text>(6R)-5,10-methylene-5,6,7,8-tetrahydrofolate + glycine + H2O = (6S)-5,6,7,8-tetrahydrofolate + L-serine</text>
        <dbReference type="Rhea" id="RHEA:15481"/>
        <dbReference type="ChEBI" id="CHEBI:15377"/>
        <dbReference type="ChEBI" id="CHEBI:15636"/>
        <dbReference type="ChEBI" id="CHEBI:33384"/>
        <dbReference type="ChEBI" id="CHEBI:57305"/>
        <dbReference type="ChEBI" id="CHEBI:57453"/>
        <dbReference type="EC" id="2.1.2.1"/>
    </reaction>
</comment>
<comment type="cofactor">
    <cofactor evidence="1">
        <name>pyridoxal 5'-phosphate</name>
        <dbReference type="ChEBI" id="CHEBI:597326"/>
    </cofactor>
</comment>
<comment type="pathway">
    <text evidence="1">One-carbon metabolism; tetrahydrofolate interconversion.</text>
</comment>
<comment type="pathway">
    <text evidence="1">Amino-acid biosynthesis; glycine biosynthesis; glycine from L-serine: step 1/1.</text>
</comment>
<comment type="subunit">
    <text evidence="1">Homodimer.</text>
</comment>
<comment type="subcellular location">
    <subcellularLocation>
        <location evidence="1">Cytoplasm</location>
    </subcellularLocation>
</comment>
<comment type="similarity">
    <text evidence="1">Belongs to the SHMT family.</text>
</comment>
<organism>
    <name type="scientific">Aster yellows witches'-broom phytoplasma (strain AYWB)</name>
    <dbReference type="NCBI Taxonomy" id="322098"/>
    <lineage>
        <taxon>Bacteria</taxon>
        <taxon>Bacillati</taxon>
        <taxon>Mycoplasmatota</taxon>
        <taxon>Mollicutes</taxon>
        <taxon>Acholeplasmatales</taxon>
        <taxon>Acholeplasmataceae</taxon>
        <taxon>Candidatus Phytoplasma</taxon>
        <taxon>16SrI (Aster yellows group)</taxon>
    </lineage>
</organism>
<evidence type="ECO:0000255" key="1">
    <source>
        <dbReference type="HAMAP-Rule" id="MF_00051"/>
    </source>
</evidence>